<organism>
    <name type="scientific">Methanocaldococcus jannaschii (strain ATCC 43067 / DSM 2661 / JAL-1 / JCM 10045 / NBRC 100440)</name>
    <name type="common">Methanococcus jannaschii</name>
    <dbReference type="NCBI Taxonomy" id="243232"/>
    <lineage>
        <taxon>Archaea</taxon>
        <taxon>Methanobacteriati</taxon>
        <taxon>Methanobacteriota</taxon>
        <taxon>Methanomada group</taxon>
        <taxon>Methanococci</taxon>
        <taxon>Methanococcales</taxon>
        <taxon>Methanocaldococcaceae</taxon>
        <taxon>Methanocaldococcus</taxon>
    </lineage>
</organism>
<name>GATA_METJA</name>
<dbReference type="EC" id="6.3.5.7"/>
<dbReference type="EMBL" id="L77117">
    <property type="protein sequence ID" value="AAB99163.1"/>
    <property type="molecule type" value="Genomic_DNA"/>
</dbReference>
<dbReference type="PIR" id="G64444">
    <property type="entry name" value="G64444"/>
</dbReference>
<dbReference type="RefSeq" id="WP_010870673.1">
    <property type="nucleotide sequence ID" value="NC_000909.1"/>
</dbReference>
<dbReference type="SMR" id="Q58560"/>
<dbReference type="FunCoup" id="Q58560">
    <property type="interactions" value="137"/>
</dbReference>
<dbReference type="STRING" id="243232.MJ_1160"/>
<dbReference type="PaxDb" id="243232-MJ_1160"/>
<dbReference type="EnsemblBacteria" id="AAB99163">
    <property type="protein sequence ID" value="AAB99163"/>
    <property type="gene ID" value="MJ_1160"/>
</dbReference>
<dbReference type="GeneID" id="1452058"/>
<dbReference type="KEGG" id="mja:MJ_1160"/>
<dbReference type="eggNOG" id="arCOG01717">
    <property type="taxonomic scope" value="Archaea"/>
</dbReference>
<dbReference type="HOGENOM" id="CLU_009600_0_3_2"/>
<dbReference type="InParanoid" id="Q58560"/>
<dbReference type="OrthoDB" id="7931at2157"/>
<dbReference type="PhylomeDB" id="Q58560"/>
<dbReference type="Proteomes" id="UP000000805">
    <property type="component" value="Chromosome"/>
</dbReference>
<dbReference type="GO" id="GO:0030956">
    <property type="term" value="C:glutamyl-tRNA(Gln) amidotransferase complex"/>
    <property type="evidence" value="ECO:0007669"/>
    <property type="project" value="InterPro"/>
</dbReference>
<dbReference type="GO" id="GO:0005524">
    <property type="term" value="F:ATP binding"/>
    <property type="evidence" value="ECO:0007669"/>
    <property type="project" value="UniProtKB-KW"/>
</dbReference>
<dbReference type="GO" id="GO:0050567">
    <property type="term" value="F:glutaminyl-tRNA synthase (glutamine-hydrolyzing) activity"/>
    <property type="evidence" value="ECO:0007669"/>
    <property type="project" value="UniProtKB-UniRule"/>
</dbReference>
<dbReference type="GO" id="GO:0006412">
    <property type="term" value="P:translation"/>
    <property type="evidence" value="ECO:0007669"/>
    <property type="project" value="UniProtKB-UniRule"/>
</dbReference>
<dbReference type="Gene3D" id="3.90.1300.10">
    <property type="entry name" value="Amidase signature (AS) domain"/>
    <property type="match status" value="1"/>
</dbReference>
<dbReference type="HAMAP" id="MF_00120">
    <property type="entry name" value="GatA"/>
    <property type="match status" value="1"/>
</dbReference>
<dbReference type="InterPro" id="IPR000120">
    <property type="entry name" value="Amidase"/>
</dbReference>
<dbReference type="InterPro" id="IPR020556">
    <property type="entry name" value="Amidase_CS"/>
</dbReference>
<dbReference type="InterPro" id="IPR023631">
    <property type="entry name" value="Amidase_dom"/>
</dbReference>
<dbReference type="InterPro" id="IPR036928">
    <property type="entry name" value="AS_sf"/>
</dbReference>
<dbReference type="InterPro" id="IPR004412">
    <property type="entry name" value="GatA"/>
</dbReference>
<dbReference type="NCBIfam" id="TIGR00132">
    <property type="entry name" value="gatA"/>
    <property type="match status" value="1"/>
</dbReference>
<dbReference type="PANTHER" id="PTHR11895:SF7">
    <property type="entry name" value="GLUTAMYL-TRNA(GLN) AMIDOTRANSFERASE SUBUNIT A, MITOCHONDRIAL"/>
    <property type="match status" value="1"/>
</dbReference>
<dbReference type="PANTHER" id="PTHR11895">
    <property type="entry name" value="TRANSAMIDASE"/>
    <property type="match status" value="1"/>
</dbReference>
<dbReference type="Pfam" id="PF01425">
    <property type="entry name" value="Amidase"/>
    <property type="match status" value="1"/>
</dbReference>
<dbReference type="SUPFAM" id="SSF75304">
    <property type="entry name" value="Amidase signature (AS) enzymes"/>
    <property type="match status" value="1"/>
</dbReference>
<dbReference type="PROSITE" id="PS00571">
    <property type="entry name" value="AMIDASES"/>
    <property type="match status" value="1"/>
</dbReference>
<keyword id="KW-0067">ATP-binding</keyword>
<keyword id="KW-0436">Ligase</keyword>
<keyword id="KW-0547">Nucleotide-binding</keyword>
<keyword id="KW-0648">Protein biosynthesis</keyword>
<keyword id="KW-1185">Reference proteome</keyword>
<comment type="function">
    <text evidence="1">Allows the formation of correctly charged Gln-tRNA(Gln) through the transamidation of misacylated Glu-tRNA(Gln) in organisms which lack glutaminyl-tRNA synthetase. The reaction takes place in the presence of glutamine and ATP through an activated gamma-phospho-Glu-tRNA(Gln) (By similarity).</text>
</comment>
<comment type="catalytic activity">
    <reaction>
        <text>L-glutamyl-tRNA(Gln) + L-glutamine + ATP + H2O = L-glutaminyl-tRNA(Gln) + L-glutamate + ADP + phosphate + H(+)</text>
        <dbReference type="Rhea" id="RHEA:17521"/>
        <dbReference type="Rhea" id="RHEA-COMP:9681"/>
        <dbReference type="Rhea" id="RHEA-COMP:9684"/>
        <dbReference type="ChEBI" id="CHEBI:15377"/>
        <dbReference type="ChEBI" id="CHEBI:15378"/>
        <dbReference type="ChEBI" id="CHEBI:29985"/>
        <dbReference type="ChEBI" id="CHEBI:30616"/>
        <dbReference type="ChEBI" id="CHEBI:43474"/>
        <dbReference type="ChEBI" id="CHEBI:58359"/>
        <dbReference type="ChEBI" id="CHEBI:78520"/>
        <dbReference type="ChEBI" id="CHEBI:78521"/>
        <dbReference type="ChEBI" id="CHEBI:456216"/>
        <dbReference type="EC" id="6.3.5.7"/>
    </reaction>
</comment>
<comment type="subunit">
    <text evidence="1">Heterotrimer of A, B and C subunits.</text>
</comment>
<comment type="similarity">
    <text evidence="2">Belongs to the amidase family. GatA subfamily.</text>
</comment>
<evidence type="ECO:0000250" key="1"/>
<evidence type="ECO:0000305" key="2"/>
<protein>
    <recommendedName>
        <fullName>Glutamyl-tRNA(Gln) amidotransferase subunit A</fullName>
        <shortName>Glu-ADT subunit A</shortName>
        <ecNumber>6.3.5.7</ecNumber>
    </recommendedName>
</protein>
<feature type="chain" id="PRO_0000105233" description="Glutamyl-tRNA(Gln) amidotransferase subunit A">
    <location>
        <begin position="1"/>
        <end position="434"/>
    </location>
</feature>
<feature type="active site" description="Charge relay system" evidence="1">
    <location>
        <position position="57"/>
    </location>
</feature>
<feature type="active site" description="Charge relay system" evidence="1">
    <location>
        <position position="132"/>
    </location>
</feature>
<feature type="active site" description="Acyl-ester intermediate" evidence="1">
    <location>
        <position position="156"/>
    </location>
</feature>
<sequence>MIVERVEEYLDRIEKINKDINALIEVKPEKVLEEAKKLEKDEKAKKKPLYGKIIVVKANINVEGYTISCASKTLENYIAPYDATVIEKIKENGGLIIGIANMDEFACGSSGETSYFGPTKNPRAKDRIPGGSSSGSAAAVSADLCDMALGSDTGGSIRNPASHCGVVGFKPSYGVVSRYGLCDLAMSFDQIGPLTKTAEDALLLTNIIKGKDLRDTTTVETKPFEKKDIKGFKVGVVKEFMDVADEKIRDKVEKAIEVFKDLGCEIVELSYKYVDLALPTYYLINYVEFFSSTRRYDGRRYGYKIEEVCGEEVLRRIMIGSMISQKEYSGKYYKNALKARNLMRNEMIKIMKDVDIIVGATVPKLPHKLGEKLTPMEMYSYDVLTVPANICGLCAGVVPCGDINGIPVGLQIQGKPFEDEKVLSAMIAFEKAME</sequence>
<gene>
    <name type="primary">gatA</name>
    <name type="ordered locus">MJ1160</name>
</gene>
<reference key="1">
    <citation type="journal article" date="1996" name="Science">
        <title>Complete genome sequence of the methanogenic archaeon, Methanococcus jannaschii.</title>
        <authorList>
            <person name="Bult C.J."/>
            <person name="White O."/>
            <person name="Olsen G.J."/>
            <person name="Zhou L."/>
            <person name="Fleischmann R.D."/>
            <person name="Sutton G.G."/>
            <person name="Blake J.A."/>
            <person name="FitzGerald L.M."/>
            <person name="Clayton R.A."/>
            <person name="Gocayne J.D."/>
            <person name="Kerlavage A.R."/>
            <person name="Dougherty B.A."/>
            <person name="Tomb J.-F."/>
            <person name="Adams M.D."/>
            <person name="Reich C.I."/>
            <person name="Overbeek R."/>
            <person name="Kirkness E.F."/>
            <person name="Weinstock K.G."/>
            <person name="Merrick J.M."/>
            <person name="Glodek A."/>
            <person name="Scott J.L."/>
            <person name="Geoghagen N.S.M."/>
            <person name="Weidman J.F."/>
            <person name="Fuhrmann J.L."/>
            <person name="Nguyen D."/>
            <person name="Utterback T.R."/>
            <person name="Kelley J.M."/>
            <person name="Peterson J.D."/>
            <person name="Sadow P.W."/>
            <person name="Hanna M.C."/>
            <person name="Cotton M.D."/>
            <person name="Roberts K.M."/>
            <person name="Hurst M.A."/>
            <person name="Kaine B.P."/>
            <person name="Borodovsky M."/>
            <person name="Klenk H.-P."/>
            <person name="Fraser C.M."/>
            <person name="Smith H.O."/>
            <person name="Woese C.R."/>
            <person name="Venter J.C."/>
        </authorList>
    </citation>
    <scope>NUCLEOTIDE SEQUENCE [LARGE SCALE GENOMIC DNA]</scope>
    <source>
        <strain>ATCC 43067 / DSM 2661 / JAL-1 / JCM 10045 / NBRC 100440</strain>
    </source>
</reference>
<proteinExistence type="inferred from homology"/>
<accession>Q58560</accession>